<organism>
    <name type="scientific">Sus scrofa</name>
    <name type="common">Pig</name>
    <dbReference type="NCBI Taxonomy" id="9823"/>
    <lineage>
        <taxon>Eukaryota</taxon>
        <taxon>Metazoa</taxon>
        <taxon>Chordata</taxon>
        <taxon>Craniata</taxon>
        <taxon>Vertebrata</taxon>
        <taxon>Euteleostomi</taxon>
        <taxon>Mammalia</taxon>
        <taxon>Eutheria</taxon>
        <taxon>Laurasiatheria</taxon>
        <taxon>Artiodactyla</taxon>
        <taxon>Suina</taxon>
        <taxon>Suidae</taxon>
        <taxon>Sus</taxon>
    </lineage>
</organism>
<reference key="1">
    <citation type="submission" date="1997-01" db="EMBL/GenBank/DDBJ databases">
        <title>Evaluation and characterization of a porcine small intestine cDNA library.</title>
        <authorList>
            <person name="Winteroe A.K."/>
            <person name="Fredholm M."/>
        </authorList>
    </citation>
    <scope>NUCLEOTIDE SEQUENCE [LARGE SCALE MRNA]</scope>
    <source>
        <tissue>Small intestine</tissue>
    </source>
</reference>
<gene>
    <name type="primary">RPL15</name>
</gene>
<sequence length="153" mass="17830">GYKAKQGYVIYRIRVRRGGRKRPVPKGATYGKPVHHGVNQLKFARSLQSVXEERAGRHCGALRVLNSYWVGEDSTYKFFEVILIDPFHKAIRRNPDTQWITKPVHKHREMRGLTSAGRKSRGLGKGHKFHHTIGGSRRAAWRRRNTLQLHRYR</sequence>
<keyword id="KW-0963">Cytoplasm</keyword>
<keyword id="KW-1017">Isopeptide bond</keyword>
<keyword id="KW-0597">Phosphoprotein</keyword>
<keyword id="KW-1185">Reference proteome</keyword>
<keyword id="KW-0687">Ribonucleoprotein</keyword>
<keyword id="KW-0689">Ribosomal protein</keyword>
<keyword id="KW-0832">Ubl conjugation</keyword>
<name>RL15_PIG</name>
<feature type="chain" id="PRO_0000127529" description="Large ribosomal subunit protein eL15">
    <location>
        <begin position="1" status="less than"/>
        <end position="153"/>
    </location>
</feature>
<feature type="region of interest" description="Disordered" evidence="2">
    <location>
        <begin position="114"/>
        <end position="135"/>
    </location>
</feature>
<feature type="compositionally biased region" description="Basic residues" evidence="2">
    <location>
        <begin position="118"/>
        <end position="131"/>
    </location>
</feature>
<feature type="modified residue" description="Phosphoserine" evidence="1">
    <location>
        <position position="46"/>
    </location>
</feature>
<feature type="modified residue" description="Phosphoserine" evidence="1">
    <location>
        <position position="49"/>
    </location>
</feature>
<feature type="cross-link" description="Glycyl lysine isopeptide (Lys-Gly) (interchain with G-Cter in SUMO2)" evidence="1">
    <location>
        <position position="32"/>
    </location>
</feature>
<feature type="non-terminal residue">
    <location>
        <position position="1"/>
    </location>
</feature>
<dbReference type="EMBL" id="Z84172">
    <property type="protein sequence ID" value="CAB06330.1"/>
    <property type="molecule type" value="mRNA"/>
</dbReference>
<dbReference type="FunCoup" id="P79324">
    <property type="interactions" value="121"/>
</dbReference>
<dbReference type="STRING" id="9823.ENSSSCP00000031932"/>
<dbReference type="PaxDb" id="9823-ENSSSCP00000024447"/>
<dbReference type="PeptideAtlas" id="P79324"/>
<dbReference type="eggNOG" id="KOG1678">
    <property type="taxonomic scope" value="Eukaryota"/>
</dbReference>
<dbReference type="InParanoid" id="P79324"/>
<dbReference type="Proteomes" id="UP000008227">
    <property type="component" value="Unplaced"/>
</dbReference>
<dbReference type="Proteomes" id="UP000314985">
    <property type="component" value="Unplaced"/>
</dbReference>
<dbReference type="Proteomes" id="UP000694570">
    <property type="component" value="Unplaced"/>
</dbReference>
<dbReference type="Proteomes" id="UP000694571">
    <property type="component" value="Unplaced"/>
</dbReference>
<dbReference type="Proteomes" id="UP000694720">
    <property type="component" value="Unplaced"/>
</dbReference>
<dbReference type="Proteomes" id="UP000694722">
    <property type="component" value="Unplaced"/>
</dbReference>
<dbReference type="Proteomes" id="UP000694723">
    <property type="component" value="Unplaced"/>
</dbReference>
<dbReference type="Proteomes" id="UP000694724">
    <property type="component" value="Unplaced"/>
</dbReference>
<dbReference type="Proteomes" id="UP000694725">
    <property type="component" value="Unplaced"/>
</dbReference>
<dbReference type="Proteomes" id="UP000694726">
    <property type="component" value="Unplaced"/>
</dbReference>
<dbReference type="Proteomes" id="UP000694727">
    <property type="component" value="Unplaced"/>
</dbReference>
<dbReference type="Proteomes" id="UP000694728">
    <property type="component" value="Unplaced"/>
</dbReference>
<dbReference type="GO" id="GO:0022625">
    <property type="term" value="C:cytosolic large ribosomal subunit"/>
    <property type="evidence" value="ECO:0000318"/>
    <property type="project" value="GO_Central"/>
</dbReference>
<dbReference type="GO" id="GO:0003723">
    <property type="term" value="F:RNA binding"/>
    <property type="evidence" value="ECO:0000318"/>
    <property type="project" value="GO_Central"/>
</dbReference>
<dbReference type="GO" id="GO:0003735">
    <property type="term" value="F:structural constituent of ribosome"/>
    <property type="evidence" value="ECO:0000318"/>
    <property type="project" value="GO_Central"/>
</dbReference>
<dbReference type="GO" id="GO:0002181">
    <property type="term" value="P:cytoplasmic translation"/>
    <property type="evidence" value="ECO:0000318"/>
    <property type="project" value="GO_Central"/>
</dbReference>
<dbReference type="FunFam" id="3.40.1120.10:FF:000001">
    <property type="entry name" value="Ribosomal protein L15"/>
    <property type="match status" value="1"/>
</dbReference>
<dbReference type="Gene3D" id="3.40.1120.10">
    <property type="entry name" value="Ribosomal protein l15e"/>
    <property type="match status" value="1"/>
</dbReference>
<dbReference type="InterPro" id="IPR024794">
    <property type="entry name" value="Rbsml_eL15_core_dom_sf"/>
</dbReference>
<dbReference type="InterPro" id="IPR000439">
    <property type="entry name" value="Ribosomal_eL15"/>
</dbReference>
<dbReference type="InterPro" id="IPR012678">
    <property type="entry name" value="Ribosomal_uL23/eL15/eS24_sf"/>
</dbReference>
<dbReference type="PANTHER" id="PTHR11847:SF4">
    <property type="entry name" value="LARGE RIBOSOMAL SUBUNIT PROTEIN EL15"/>
    <property type="match status" value="1"/>
</dbReference>
<dbReference type="PANTHER" id="PTHR11847">
    <property type="entry name" value="RIBOSOMAL PROTEIN L15"/>
    <property type="match status" value="1"/>
</dbReference>
<dbReference type="Pfam" id="PF00827">
    <property type="entry name" value="Ribosomal_L15e"/>
    <property type="match status" value="1"/>
</dbReference>
<dbReference type="SMART" id="SM01384">
    <property type="entry name" value="Ribosomal_L15e"/>
    <property type="match status" value="1"/>
</dbReference>
<dbReference type="SUPFAM" id="SSF54189">
    <property type="entry name" value="Ribosomal proteins S24e, L23 and L15e"/>
    <property type="match status" value="1"/>
</dbReference>
<proteinExistence type="evidence at transcript level"/>
<comment type="function">
    <text evidence="1">Component of the large ribosomal subunit. The ribosome is a large ribonucleoprotein complex responsible for the synthesis of proteins in the cell.</text>
</comment>
<comment type="subunit">
    <text evidence="1">Component of the large ribosomal subunit. Interacts with IFIT1 (via TPR repeats 1-4).</text>
</comment>
<comment type="subcellular location">
    <subcellularLocation>
        <location evidence="1">Cytoplasm</location>
    </subcellularLocation>
</comment>
<comment type="similarity">
    <text evidence="3">Belongs to the eukaryotic ribosomal protein eL15 family.</text>
</comment>
<accession>P79324</accession>
<protein>
    <recommendedName>
        <fullName evidence="3">Large ribosomal subunit protein eL15</fullName>
    </recommendedName>
    <alternativeName>
        <fullName>60S ribosomal protein L15</fullName>
    </alternativeName>
</protein>
<evidence type="ECO:0000250" key="1">
    <source>
        <dbReference type="UniProtKB" id="P61313"/>
    </source>
</evidence>
<evidence type="ECO:0000256" key="2">
    <source>
        <dbReference type="SAM" id="MobiDB-lite"/>
    </source>
</evidence>
<evidence type="ECO:0000305" key="3"/>